<protein>
    <recommendedName>
        <fullName>Protein phosphatase 1 regulatory subunit 3B</fullName>
    </recommendedName>
    <alternativeName>
        <fullName>Hepatic glycogen-targeting protein phosphatase 1 regulatory subunit GL</fullName>
    </alternativeName>
    <alternativeName>
        <fullName>Protein phosphatase 1 regulatory subunit 4</fullName>
        <shortName>PP1 subunit R4</shortName>
    </alternativeName>
    <alternativeName>
        <fullName>Protein phosphatase 1 subunit GL</fullName>
        <shortName>PTG</shortName>
    </alternativeName>
</protein>
<accession>Q86XI6</accession>
<accession>B3KTV3</accession>
<accession>Q9H812</accession>
<organism>
    <name type="scientific">Homo sapiens</name>
    <name type="common">Human</name>
    <dbReference type="NCBI Taxonomy" id="9606"/>
    <lineage>
        <taxon>Eukaryota</taxon>
        <taxon>Metazoa</taxon>
        <taxon>Chordata</taxon>
        <taxon>Craniata</taxon>
        <taxon>Vertebrata</taxon>
        <taxon>Euteleostomi</taxon>
        <taxon>Mammalia</taxon>
        <taxon>Eutheria</taxon>
        <taxon>Euarchontoglires</taxon>
        <taxon>Primates</taxon>
        <taxon>Haplorrhini</taxon>
        <taxon>Catarrhini</taxon>
        <taxon>Hominidae</taxon>
        <taxon>Homo</taxon>
    </lineage>
</organism>
<keyword id="KW-0002">3D-structure</keyword>
<keyword id="KW-0119">Carbohydrate metabolism</keyword>
<keyword id="KW-0321">Glycogen metabolism</keyword>
<keyword id="KW-0597">Phosphoprotein</keyword>
<keyword id="KW-1267">Proteomics identification</keyword>
<keyword id="KW-1185">Reference proteome</keyword>
<name>PPR3B_HUMAN</name>
<comment type="function">
    <text evidence="1">Acts as a glycogen-targeting subunit for phosphatase PP1. Facilitates interaction of the PP1 with enzymes of the glycogen metabolism and regulates its activity. Suppresses the rate at which PP1 dephosphorylates (inactivates) glycogen phosphorylase and enhances the rate at which it activates glycogen synthase and therefore limits glycogen breakdown. Its activity is inhibited by PYGL, resulting in inhibition of the glycogen synthase and glycogen phosphorylase phosphatase activities of PP1. Dramatically increases basal and insulin-stimulated glycogen synthesis upon overexpression in hepatocytes (By similarity).</text>
</comment>
<comment type="subunit">
    <text evidence="1">Interacts with glycogen, PPP1CC catalytic subunit of PP1 and PYGL. Associates with glycogen particles. Forms complexes with debranching enzyme, glycogen phosphorylase, glycogen synthase and phosphorylase kinase which is necessary for its regulation of PP1 activity (By similarity).</text>
</comment>
<comment type="interaction">
    <interactant intactId="EBI-3918864">
        <id>Q86XI6</id>
    </interactant>
    <interactant intactId="EBI-357253">
        <id>P62136</id>
        <label>PPP1CA</label>
    </interactant>
    <organismsDiffer>false</organismsDiffer>
    <experiments>5</experiments>
</comment>
<comment type="interaction">
    <interactant intactId="EBI-3918864">
        <id>Q86XI6</id>
    </interactant>
    <interactant intactId="EBI-356283">
        <id>P36873</id>
        <label>PPP1CC</label>
    </interactant>
    <organismsDiffer>false</organismsDiffer>
    <experiments>5</experiments>
</comment>
<comment type="interaction">
    <interactant intactId="EBI-3918864">
        <id>Q86XI6</id>
    </interactant>
    <interactant intactId="EBI-1047231">
        <id>P11216</id>
        <label>PYGB</label>
    </interactant>
    <organismsDiffer>false</organismsDiffer>
    <experiments>5</experiments>
</comment>
<comment type="tissue specificity">
    <text evidence="4 5">Highly expressed in the liver and, at lower levels, in skeletal muscle, including in vastus lateralis, gastrocnemius and soleus (at protein level). Highest mRNA levels are observed in skeletal muscle, and only moderate levels in liver and heart. Weak expression in placenta and lung.</text>
</comment>
<comment type="domain">
    <text evidence="1">The N-terminal region is required for binding to PP1, the central region is required for binding to glycogen and the C-terminal region is required for binding to PYGL.</text>
</comment>
<gene>
    <name type="primary">PPP1R3B</name>
    <name type="synonym">PPP1R4</name>
</gene>
<feature type="chain" id="PRO_0000324543" description="Protein phosphatase 1 regulatory subunit 3B">
    <location>
        <begin position="1"/>
        <end position="285"/>
    </location>
</feature>
<feature type="domain" description="CBM21" evidence="3">
    <location>
        <begin position="125"/>
        <end position="233"/>
    </location>
</feature>
<feature type="short sequence motif" description="PP1-binding motif">
    <location>
        <begin position="62"/>
        <end position="65"/>
    </location>
</feature>
<feature type="modified residue" description="Phosphoserine" evidence="2">
    <location>
        <position position="261"/>
    </location>
</feature>
<feature type="sequence variant" id="VAR_039814" description="In dbSNP:rs3748140.">
    <original>G</original>
    <variation>E</variation>
    <location>
        <position position="48"/>
    </location>
</feature>
<feature type="sequence conflict" description="In Ref. 1; BAB14811." evidence="6" ref="1">
    <original>V</original>
    <variation>A</variation>
    <location>
        <position position="149"/>
    </location>
</feature>
<feature type="turn" evidence="8">
    <location>
        <begin position="66"/>
        <end position="70"/>
    </location>
</feature>
<feature type="strand" evidence="8">
    <location>
        <begin position="74"/>
        <end position="76"/>
    </location>
</feature>
<feature type="strand" evidence="7">
    <location>
        <begin position="110"/>
        <end position="114"/>
    </location>
</feature>
<feature type="helix" evidence="7">
    <location>
        <begin position="121"/>
        <end position="130"/>
    </location>
</feature>
<feature type="strand" evidence="7">
    <location>
        <begin position="131"/>
        <end position="141"/>
    </location>
</feature>
<feature type="strand" evidence="7">
    <location>
        <begin position="144"/>
        <end position="151"/>
    </location>
</feature>
<feature type="strand" evidence="7">
    <location>
        <begin position="154"/>
        <end position="156"/>
    </location>
</feature>
<feature type="strand" evidence="7">
    <location>
        <begin position="159"/>
        <end position="167"/>
    </location>
</feature>
<feature type="strand" evidence="7">
    <location>
        <begin position="170"/>
        <end position="176"/>
    </location>
</feature>
<feature type="strand" evidence="7">
    <location>
        <begin position="183"/>
        <end position="185"/>
    </location>
</feature>
<feature type="strand" evidence="7">
    <location>
        <begin position="187"/>
        <end position="189"/>
    </location>
</feature>
<feature type="strand" evidence="7">
    <location>
        <begin position="191"/>
        <end position="194"/>
    </location>
</feature>
<feature type="strand" evidence="7">
    <location>
        <begin position="209"/>
        <end position="216"/>
    </location>
</feature>
<feature type="strand" evidence="7">
    <location>
        <begin position="219"/>
        <end position="224"/>
    </location>
</feature>
<feature type="helix" evidence="7">
    <location>
        <begin position="225"/>
        <end position="227"/>
    </location>
</feature>
<feature type="strand" evidence="7">
    <location>
        <begin position="232"/>
        <end position="234"/>
    </location>
</feature>
<feature type="turn" evidence="7">
    <location>
        <begin position="235"/>
        <end position="237"/>
    </location>
</feature>
<proteinExistence type="evidence at protein level"/>
<evidence type="ECO:0000250" key="1"/>
<evidence type="ECO:0000250" key="2">
    <source>
        <dbReference type="UniProtKB" id="Q8C767"/>
    </source>
</evidence>
<evidence type="ECO:0000255" key="3">
    <source>
        <dbReference type="PROSITE-ProRule" id="PRU00491"/>
    </source>
</evidence>
<evidence type="ECO:0000269" key="4">
    <source>
    </source>
</evidence>
<evidence type="ECO:0000269" key="5">
    <source>
    </source>
</evidence>
<evidence type="ECO:0000305" key="6"/>
<evidence type="ECO:0007829" key="7">
    <source>
        <dbReference type="PDB" id="2EEF"/>
    </source>
</evidence>
<evidence type="ECO:0007829" key="8">
    <source>
        <dbReference type="PDB" id="5ZT0"/>
    </source>
</evidence>
<dbReference type="EMBL" id="AK024067">
    <property type="protein sequence ID" value="BAB14811.1"/>
    <property type="molecule type" value="mRNA"/>
</dbReference>
<dbReference type="EMBL" id="AK096119">
    <property type="protein sequence ID" value="BAG53215.1"/>
    <property type="molecule type" value="mRNA"/>
</dbReference>
<dbReference type="EMBL" id="CH471157">
    <property type="protein sequence ID" value="EAW65572.1"/>
    <property type="molecule type" value="Genomic_DNA"/>
</dbReference>
<dbReference type="EMBL" id="BC043388">
    <property type="protein sequence ID" value="AAH43388.1"/>
    <property type="molecule type" value="mRNA"/>
</dbReference>
<dbReference type="CCDS" id="CCDS5973.1"/>
<dbReference type="RefSeq" id="NP_001188258.1">
    <property type="nucleotide sequence ID" value="NM_001201329.2"/>
</dbReference>
<dbReference type="RefSeq" id="NP_078883.2">
    <property type="nucleotide sequence ID" value="NM_024607.4"/>
</dbReference>
<dbReference type="RefSeq" id="XP_006716316.1">
    <property type="nucleotide sequence ID" value="XM_006716253.4"/>
</dbReference>
<dbReference type="RefSeq" id="XP_016869324.1">
    <property type="nucleotide sequence ID" value="XM_017013835.1"/>
</dbReference>
<dbReference type="RefSeq" id="XP_047278191.1">
    <property type="nucleotide sequence ID" value="XM_047422235.1"/>
</dbReference>
<dbReference type="RefSeq" id="XP_054188238.1">
    <property type="nucleotide sequence ID" value="XM_054332263.1"/>
</dbReference>
<dbReference type="RefSeq" id="XP_054188239.1">
    <property type="nucleotide sequence ID" value="XM_054332264.1"/>
</dbReference>
<dbReference type="RefSeq" id="XP_054217207.1">
    <property type="nucleotide sequence ID" value="XM_054361232.1"/>
</dbReference>
<dbReference type="RefSeq" id="XP_054217208.1">
    <property type="nucleotide sequence ID" value="XM_054361233.1"/>
</dbReference>
<dbReference type="PDB" id="2EEF">
    <property type="method" value="NMR"/>
    <property type="chains" value="A=105-253"/>
</dbReference>
<dbReference type="PDB" id="5ZT0">
    <property type="method" value="X-ray"/>
    <property type="resolution" value="3.32 A"/>
    <property type="chains" value="G/H/I/J=31-105"/>
</dbReference>
<dbReference type="PDBsum" id="2EEF"/>
<dbReference type="PDBsum" id="5ZT0"/>
<dbReference type="BMRB" id="Q86XI6"/>
<dbReference type="SMR" id="Q86XI6"/>
<dbReference type="BioGRID" id="122786">
    <property type="interactions" value="19"/>
</dbReference>
<dbReference type="FunCoup" id="Q86XI6">
    <property type="interactions" value="213"/>
</dbReference>
<dbReference type="IntAct" id="Q86XI6">
    <property type="interactions" value="13"/>
</dbReference>
<dbReference type="MINT" id="Q86XI6"/>
<dbReference type="STRING" id="9606.ENSP00000308318"/>
<dbReference type="CAZy" id="CBM21">
    <property type="family name" value="Carbohydrate-Binding Module Family 21"/>
</dbReference>
<dbReference type="iPTMnet" id="Q86XI6"/>
<dbReference type="PhosphoSitePlus" id="Q86XI6"/>
<dbReference type="BioMuta" id="PPP1R3B"/>
<dbReference type="DMDM" id="74727837"/>
<dbReference type="jPOST" id="Q86XI6"/>
<dbReference type="MassIVE" id="Q86XI6"/>
<dbReference type="PaxDb" id="9606-ENSP00000308318"/>
<dbReference type="PeptideAtlas" id="Q86XI6"/>
<dbReference type="ProteomicsDB" id="70281"/>
<dbReference type="Antibodypedia" id="22075">
    <property type="antibodies" value="128 antibodies from 22 providers"/>
</dbReference>
<dbReference type="DNASU" id="79660"/>
<dbReference type="Ensembl" id="ENST00000310455.4">
    <property type="protein sequence ID" value="ENSP00000308318.3"/>
    <property type="gene ID" value="ENSG00000173281.5"/>
</dbReference>
<dbReference type="Ensembl" id="ENST00000519699.1">
    <property type="protein sequence ID" value="ENSP00000428642.1"/>
    <property type="gene ID" value="ENSG00000173281.5"/>
</dbReference>
<dbReference type="Ensembl" id="ENST00000644687.1">
    <property type="protein sequence ID" value="ENSP00000493491.1"/>
    <property type="gene ID" value="ENSG00000285343.2"/>
</dbReference>
<dbReference type="Ensembl" id="ENST00000645121.2">
    <property type="protein sequence ID" value="ENSP00000494659.1"/>
    <property type="gene ID" value="ENSG00000285343.2"/>
</dbReference>
<dbReference type="GeneID" id="79660"/>
<dbReference type="KEGG" id="hsa:79660"/>
<dbReference type="MANE-Select" id="ENST00000310455.4">
    <property type="protein sequence ID" value="ENSP00000308318.3"/>
    <property type="RefSeq nucleotide sequence ID" value="NM_024607.4"/>
    <property type="RefSeq protein sequence ID" value="NP_078883.2"/>
</dbReference>
<dbReference type="UCSC" id="uc003wsn.5">
    <property type="organism name" value="human"/>
</dbReference>
<dbReference type="AGR" id="HGNC:14942"/>
<dbReference type="CTD" id="79660"/>
<dbReference type="DisGeNET" id="79660"/>
<dbReference type="GeneCards" id="PPP1R3B"/>
<dbReference type="HGNC" id="HGNC:14942">
    <property type="gene designation" value="PPP1R3B"/>
</dbReference>
<dbReference type="HPA" id="ENSG00000173281">
    <property type="expression patterns" value="Tissue enhanced (liver, skeletal muscle)"/>
</dbReference>
<dbReference type="MIM" id="610541">
    <property type="type" value="gene"/>
</dbReference>
<dbReference type="neXtProt" id="NX_Q86XI6"/>
<dbReference type="OpenTargets" id="ENSG00000173281"/>
<dbReference type="PharmGKB" id="PA33652"/>
<dbReference type="VEuPathDB" id="HostDB:ENSG00000173281"/>
<dbReference type="eggNOG" id="KOG3986">
    <property type="taxonomic scope" value="Eukaryota"/>
</dbReference>
<dbReference type="GeneTree" id="ENSGT00940000159475"/>
<dbReference type="HOGENOM" id="CLU_040215_2_1_1"/>
<dbReference type="InParanoid" id="Q86XI6"/>
<dbReference type="OMA" id="YRIIQAE"/>
<dbReference type="OrthoDB" id="8942186at2759"/>
<dbReference type="PAN-GO" id="Q86XI6">
    <property type="GO annotations" value="4 GO annotations based on evolutionary models"/>
</dbReference>
<dbReference type="PhylomeDB" id="Q86XI6"/>
<dbReference type="TreeFam" id="TF105537"/>
<dbReference type="PathwayCommons" id="Q86XI6"/>
<dbReference type="SignaLink" id="Q86XI6"/>
<dbReference type="SIGNOR" id="Q86XI6"/>
<dbReference type="BioGRID-ORCS" id="79660">
    <property type="hits" value="14 hits in 1155 CRISPR screens"/>
</dbReference>
<dbReference type="ChiTaRS" id="PPP1R3B">
    <property type="organism name" value="human"/>
</dbReference>
<dbReference type="EvolutionaryTrace" id="Q86XI6"/>
<dbReference type="GenomeRNAi" id="79660"/>
<dbReference type="Pharos" id="Q86XI6">
    <property type="development level" value="Tbio"/>
</dbReference>
<dbReference type="PRO" id="PR:Q86XI6"/>
<dbReference type="Proteomes" id="UP000005640">
    <property type="component" value="Chromosome 8"/>
</dbReference>
<dbReference type="RNAct" id="Q86XI6">
    <property type="molecule type" value="protein"/>
</dbReference>
<dbReference type="Bgee" id="ENSG00000173281">
    <property type="expression patterns" value="Expressed in skeletal muscle tissue and 105 other cell types or tissues"/>
</dbReference>
<dbReference type="GO" id="GO:0042587">
    <property type="term" value="C:glycogen granule"/>
    <property type="evidence" value="ECO:0007669"/>
    <property type="project" value="Ensembl"/>
</dbReference>
<dbReference type="GO" id="GO:0000164">
    <property type="term" value="C:protein phosphatase type 1 complex"/>
    <property type="evidence" value="ECO:0000318"/>
    <property type="project" value="GO_Central"/>
</dbReference>
<dbReference type="GO" id="GO:0050196">
    <property type="term" value="F:[phosphorylase] phosphatase activity"/>
    <property type="evidence" value="ECO:0007669"/>
    <property type="project" value="Ensembl"/>
</dbReference>
<dbReference type="GO" id="GO:2001069">
    <property type="term" value="F:glycogen binding"/>
    <property type="evidence" value="ECO:0000318"/>
    <property type="project" value="GO_Central"/>
</dbReference>
<dbReference type="GO" id="GO:0008157">
    <property type="term" value="F:protein phosphatase 1 binding"/>
    <property type="evidence" value="ECO:0000318"/>
    <property type="project" value="GO_Central"/>
</dbReference>
<dbReference type="GO" id="GO:0019888">
    <property type="term" value="F:protein phosphatase regulator activity"/>
    <property type="evidence" value="ECO:0007669"/>
    <property type="project" value="Ensembl"/>
</dbReference>
<dbReference type="GO" id="GO:0005977">
    <property type="term" value="P:glycogen metabolic process"/>
    <property type="evidence" value="ECO:0007669"/>
    <property type="project" value="UniProtKB-KW"/>
</dbReference>
<dbReference type="GO" id="GO:0045818">
    <property type="term" value="P:negative regulation of glycogen catabolic process"/>
    <property type="evidence" value="ECO:0000314"/>
    <property type="project" value="MGI"/>
</dbReference>
<dbReference type="GO" id="GO:0045725">
    <property type="term" value="P:positive regulation of glycogen biosynthetic process"/>
    <property type="evidence" value="ECO:0007669"/>
    <property type="project" value="Ensembl"/>
</dbReference>
<dbReference type="GO" id="GO:0005979">
    <property type="term" value="P:regulation of glycogen biosynthetic process"/>
    <property type="evidence" value="ECO:0000318"/>
    <property type="project" value="GO_Central"/>
</dbReference>
<dbReference type="CDD" id="cd22814">
    <property type="entry name" value="PBD_PPP1R3B"/>
    <property type="match status" value="1"/>
</dbReference>
<dbReference type="DisProt" id="DP03015"/>
<dbReference type="FunFam" id="2.60.40.2440:FF:000001">
    <property type="entry name" value="Protein phosphatase 1 regulatory subunit 3C"/>
    <property type="match status" value="1"/>
</dbReference>
<dbReference type="Gene3D" id="2.60.40.2440">
    <property type="entry name" value="Carbohydrate binding type-21 domain"/>
    <property type="match status" value="1"/>
</dbReference>
<dbReference type="InterPro" id="IPR005036">
    <property type="entry name" value="CBM21_dom"/>
</dbReference>
<dbReference type="InterPro" id="IPR038175">
    <property type="entry name" value="CBM21_dom_sf"/>
</dbReference>
<dbReference type="InterPro" id="IPR017434">
    <property type="entry name" value="Pase-1_reg-su_3B/C/D_met"/>
</dbReference>
<dbReference type="InterPro" id="IPR030682">
    <property type="entry name" value="PP1_3B"/>
</dbReference>
<dbReference type="InterPro" id="IPR050782">
    <property type="entry name" value="PP1_regulatory_subunit_3"/>
</dbReference>
<dbReference type="PANTHER" id="PTHR12307">
    <property type="entry name" value="PROTEIN PHOSPHATASE 1 REGULATORY SUBUNIT"/>
    <property type="match status" value="1"/>
</dbReference>
<dbReference type="PANTHER" id="PTHR12307:SF13">
    <property type="entry name" value="PROTEIN PHOSPHATASE 1 REGULATORY SUBUNIT 3B"/>
    <property type="match status" value="1"/>
</dbReference>
<dbReference type="Pfam" id="PF03370">
    <property type="entry name" value="CBM_21"/>
    <property type="match status" value="1"/>
</dbReference>
<dbReference type="PIRSF" id="PIRSF500814">
    <property type="entry name" value="PP1_GL"/>
    <property type="match status" value="1"/>
</dbReference>
<dbReference type="PIRSF" id="PIRSF038207">
    <property type="entry name" value="PP1_GT_animal"/>
    <property type="match status" value="1"/>
</dbReference>
<dbReference type="PROSITE" id="PS51159">
    <property type="entry name" value="CBM21"/>
    <property type="match status" value="1"/>
</dbReference>
<sequence length="285" mass="32695">MMAVDIEYRYNCMAPSLRQERFAFKISPKPSKPLRPCIQLSSKNEASGMVAPAVQEKKVKKRVSFADNQGLALTMVKVFSEFDDPLDMPFNITELLDNIVSLTTAESESFVLDFSQPSADYLDFRNRLQADHVCLENCVLKDKAIAGTVKVQNLAFEKTVKIRMTFDTWKSYTDFPCQYVKDTYAGSDRDTFSFDISLPEKIQSYERMEFAVYYECNGQTYWDSNRGKNYRIIRAELKSTQGMTKPHSGPDLGISFDQFGSPRCSYGLFPEWPSYLGYEKLGPYY</sequence>
<reference key="1">
    <citation type="journal article" date="2004" name="Nat. Genet.">
        <title>Complete sequencing and characterization of 21,243 full-length human cDNAs.</title>
        <authorList>
            <person name="Ota T."/>
            <person name="Suzuki Y."/>
            <person name="Nishikawa T."/>
            <person name="Otsuki T."/>
            <person name="Sugiyama T."/>
            <person name="Irie R."/>
            <person name="Wakamatsu A."/>
            <person name="Hayashi K."/>
            <person name="Sato H."/>
            <person name="Nagai K."/>
            <person name="Kimura K."/>
            <person name="Makita H."/>
            <person name="Sekine M."/>
            <person name="Obayashi M."/>
            <person name="Nishi T."/>
            <person name="Shibahara T."/>
            <person name="Tanaka T."/>
            <person name="Ishii S."/>
            <person name="Yamamoto J."/>
            <person name="Saito K."/>
            <person name="Kawai Y."/>
            <person name="Isono Y."/>
            <person name="Nakamura Y."/>
            <person name="Nagahari K."/>
            <person name="Murakami K."/>
            <person name="Yasuda T."/>
            <person name="Iwayanagi T."/>
            <person name="Wagatsuma M."/>
            <person name="Shiratori A."/>
            <person name="Sudo H."/>
            <person name="Hosoiri T."/>
            <person name="Kaku Y."/>
            <person name="Kodaira H."/>
            <person name="Kondo H."/>
            <person name="Sugawara M."/>
            <person name="Takahashi M."/>
            <person name="Kanda K."/>
            <person name="Yokoi T."/>
            <person name="Furuya T."/>
            <person name="Kikkawa E."/>
            <person name="Omura Y."/>
            <person name="Abe K."/>
            <person name="Kamihara K."/>
            <person name="Katsuta N."/>
            <person name="Sato K."/>
            <person name="Tanikawa M."/>
            <person name="Yamazaki M."/>
            <person name="Ninomiya K."/>
            <person name="Ishibashi T."/>
            <person name="Yamashita H."/>
            <person name="Murakawa K."/>
            <person name="Fujimori K."/>
            <person name="Tanai H."/>
            <person name="Kimata M."/>
            <person name="Watanabe M."/>
            <person name="Hiraoka S."/>
            <person name="Chiba Y."/>
            <person name="Ishida S."/>
            <person name="Ono Y."/>
            <person name="Takiguchi S."/>
            <person name="Watanabe S."/>
            <person name="Yosida M."/>
            <person name="Hotuta T."/>
            <person name="Kusano J."/>
            <person name="Kanehori K."/>
            <person name="Takahashi-Fujii A."/>
            <person name="Hara H."/>
            <person name="Tanase T.-O."/>
            <person name="Nomura Y."/>
            <person name="Togiya S."/>
            <person name="Komai F."/>
            <person name="Hara R."/>
            <person name="Takeuchi K."/>
            <person name="Arita M."/>
            <person name="Imose N."/>
            <person name="Musashino K."/>
            <person name="Yuuki H."/>
            <person name="Oshima A."/>
            <person name="Sasaki N."/>
            <person name="Aotsuka S."/>
            <person name="Yoshikawa Y."/>
            <person name="Matsunawa H."/>
            <person name="Ichihara T."/>
            <person name="Shiohata N."/>
            <person name="Sano S."/>
            <person name="Moriya S."/>
            <person name="Momiyama H."/>
            <person name="Satoh N."/>
            <person name="Takami S."/>
            <person name="Terashima Y."/>
            <person name="Suzuki O."/>
            <person name="Nakagawa S."/>
            <person name="Senoh A."/>
            <person name="Mizoguchi H."/>
            <person name="Goto Y."/>
            <person name="Shimizu F."/>
            <person name="Wakebe H."/>
            <person name="Hishigaki H."/>
            <person name="Watanabe T."/>
            <person name="Sugiyama A."/>
            <person name="Takemoto M."/>
            <person name="Kawakami B."/>
            <person name="Yamazaki M."/>
            <person name="Watanabe K."/>
            <person name="Kumagai A."/>
            <person name="Itakura S."/>
            <person name="Fukuzumi Y."/>
            <person name="Fujimori Y."/>
            <person name="Komiyama M."/>
            <person name="Tashiro H."/>
            <person name="Tanigami A."/>
            <person name="Fujiwara T."/>
            <person name="Ono T."/>
            <person name="Yamada K."/>
            <person name="Fujii Y."/>
            <person name="Ozaki K."/>
            <person name="Hirao M."/>
            <person name="Ohmori Y."/>
            <person name="Kawabata A."/>
            <person name="Hikiji T."/>
            <person name="Kobatake N."/>
            <person name="Inagaki H."/>
            <person name="Ikema Y."/>
            <person name="Okamoto S."/>
            <person name="Okitani R."/>
            <person name="Kawakami T."/>
            <person name="Noguchi S."/>
            <person name="Itoh T."/>
            <person name="Shigeta K."/>
            <person name="Senba T."/>
            <person name="Matsumura K."/>
            <person name="Nakajima Y."/>
            <person name="Mizuno T."/>
            <person name="Morinaga M."/>
            <person name="Sasaki M."/>
            <person name="Togashi T."/>
            <person name="Oyama M."/>
            <person name="Hata H."/>
            <person name="Watanabe M."/>
            <person name="Komatsu T."/>
            <person name="Mizushima-Sugano J."/>
            <person name="Satoh T."/>
            <person name="Shirai Y."/>
            <person name="Takahashi Y."/>
            <person name="Nakagawa K."/>
            <person name="Okumura K."/>
            <person name="Nagase T."/>
            <person name="Nomura N."/>
            <person name="Kikuchi H."/>
            <person name="Masuho Y."/>
            <person name="Yamashita R."/>
            <person name="Nakai K."/>
            <person name="Yada T."/>
            <person name="Nakamura Y."/>
            <person name="Ohara O."/>
            <person name="Isogai T."/>
            <person name="Sugano S."/>
        </authorList>
    </citation>
    <scope>NUCLEOTIDE SEQUENCE [LARGE SCALE MRNA]</scope>
    <source>
        <tissue>Liver</tissue>
        <tissue>Retinoblastoma</tissue>
    </source>
</reference>
<reference key="2">
    <citation type="submission" date="2005-07" db="EMBL/GenBank/DDBJ databases">
        <authorList>
            <person name="Mural R.J."/>
            <person name="Istrail S."/>
            <person name="Sutton G.G."/>
            <person name="Florea L."/>
            <person name="Halpern A.L."/>
            <person name="Mobarry C.M."/>
            <person name="Lippert R."/>
            <person name="Walenz B."/>
            <person name="Shatkay H."/>
            <person name="Dew I."/>
            <person name="Miller J.R."/>
            <person name="Flanigan M.J."/>
            <person name="Edwards N.J."/>
            <person name="Bolanos R."/>
            <person name="Fasulo D."/>
            <person name="Halldorsson B.V."/>
            <person name="Hannenhalli S."/>
            <person name="Turner R."/>
            <person name="Yooseph S."/>
            <person name="Lu F."/>
            <person name="Nusskern D.R."/>
            <person name="Shue B.C."/>
            <person name="Zheng X.H."/>
            <person name="Zhong F."/>
            <person name="Delcher A.L."/>
            <person name="Huson D.H."/>
            <person name="Kravitz S.A."/>
            <person name="Mouchard L."/>
            <person name="Reinert K."/>
            <person name="Remington K.A."/>
            <person name="Clark A.G."/>
            <person name="Waterman M.S."/>
            <person name="Eichler E.E."/>
            <person name="Adams M.D."/>
            <person name="Hunkapiller M.W."/>
            <person name="Myers E.W."/>
            <person name="Venter J.C."/>
        </authorList>
    </citation>
    <scope>NUCLEOTIDE SEQUENCE [LARGE SCALE GENOMIC DNA]</scope>
</reference>
<reference key="3">
    <citation type="journal article" date="2004" name="Genome Res.">
        <title>The status, quality, and expansion of the NIH full-length cDNA project: the Mammalian Gene Collection (MGC).</title>
        <authorList>
            <consortium name="The MGC Project Team"/>
        </authorList>
    </citation>
    <scope>NUCLEOTIDE SEQUENCE [LARGE SCALE MRNA]</scope>
    <source>
        <tissue>Skin</tissue>
    </source>
</reference>
<reference key="4">
    <citation type="journal article" date="2002" name="Diabetes">
        <title>Human skeletal muscle expresses a glycogen-targeting subunit of PP1 that is identical to the insulin-sensitive glycogen-targeting subunit G(L) of liver.</title>
        <authorList>
            <person name="Munro S."/>
            <person name="Cuthbertson D.J."/>
            <person name="Cunningham J."/>
            <person name="Sales M."/>
            <person name="Cohen P.T.W."/>
        </authorList>
    </citation>
    <scope>TISSUE SPECIFICITY</scope>
</reference>
<reference key="5">
    <citation type="journal article" date="2007" name="Biochem. J.">
        <title>Expression and glycogenic effect of glycogen-targeting protein phosphatase 1 regulatory subunit GL in cultured human muscle.</title>
        <authorList>
            <person name="Montori-Grau M."/>
            <person name="Guitart M."/>
            <person name="Lerin C."/>
            <person name="Andreu A.L."/>
            <person name="Newgard C.B."/>
            <person name="Garcia-Martinez C."/>
            <person name="Gomez-Foix A.M."/>
        </authorList>
    </citation>
    <scope>TISSUE SPECIFICITY</scope>
</reference>
<reference key="6">
    <citation type="journal article" date="2014" name="J. Proteomics">
        <title>An enzyme assisted RP-RPLC approach for in-depth analysis of human liver phosphoproteome.</title>
        <authorList>
            <person name="Bian Y."/>
            <person name="Song C."/>
            <person name="Cheng K."/>
            <person name="Dong M."/>
            <person name="Wang F."/>
            <person name="Huang J."/>
            <person name="Sun D."/>
            <person name="Wang L."/>
            <person name="Ye M."/>
            <person name="Zou H."/>
        </authorList>
    </citation>
    <scope>IDENTIFICATION BY MASS SPECTROMETRY [LARGE SCALE ANALYSIS]</scope>
    <source>
        <tissue>Liver</tissue>
    </source>
</reference>
<reference key="7">
    <citation type="submission" date="2007-08" db="PDB data bank">
        <title>Solution structure of the CBM21 domain from human protein phosphatase 1, regulatory (inhibitor) subunit 3B.</title>
        <authorList>
            <consortium name="RIKEN structural genomics initiative (RSGI)"/>
        </authorList>
    </citation>
    <scope>STRUCTURE BY NMR OF 105-253</scope>
</reference>